<comment type="function">
    <text evidence="1">Commits homoserine to the threonine biosynthesis pathway by catalyzing its O-phosphorylation.</text>
</comment>
<comment type="catalytic activity">
    <reaction evidence="1">
        <text>L-homoserine + ATP = O-phospho-L-homoserine + ADP + H(+)</text>
        <dbReference type="Rhea" id="RHEA:13985"/>
        <dbReference type="ChEBI" id="CHEBI:15378"/>
        <dbReference type="ChEBI" id="CHEBI:30616"/>
        <dbReference type="ChEBI" id="CHEBI:57476"/>
        <dbReference type="ChEBI" id="CHEBI:57590"/>
        <dbReference type="ChEBI" id="CHEBI:456216"/>
        <dbReference type="EC" id="2.7.1.39"/>
    </reaction>
    <physiologicalReaction direction="left-to-right" evidence="1">
        <dbReference type="Rhea" id="RHEA:13986"/>
    </physiologicalReaction>
</comment>
<comment type="pathway">
    <text evidence="1">Amino-acid biosynthesis; L-threonine biosynthesis; L-threonine from L-aspartate: step 4/5.</text>
</comment>
<comment type="similarity">
    <text evidence="2">Belongs to the GHMP kinase family. Homoserine kinase subfamily.</text>
</comment>
<sequence length="338" mass="36608">MQKFQIKVPASSANIGPGFDVLGMSLEEYMTLDVEVSTESGPCVLTYEGDGKEHVSLDVQKNMITQTSLYVLRCNNISTFPYATKIHVINPIPLGRGMGSSGSAAIAGVMLANEIAKLGLSKLQMMDYVLMIERHPDNVMASMMGGFVGSFLRELSEEEKNAFSPSADDLLKNEALTLPPKSLGTFARLPWASELKAIVVIPEFHLATSKARSVLPTSYGRTDVVYNLQRLALLTTALGQTPINPHLVYEVMKDKVHQPYRASLIPGLQNILATLNPDTQPGLCGICLSGAGPTVLALATGNFDEIAHAMLSIFEKHGVKCRYLVLSPAFDGATVKYF</sequence>
<accession>O43056</accession>
<organism>
    <name type="scientific">Schizosaccharomyces pombe (strain 972 / ATCC 24843)</name>
    <name type="common">Fission yeast</name>
    <dbReference type="NCBI Taxonomy" id="284812"/>
    <lineage>
        <taxon>Eukaryota</taxon>
        <taxon>Fungi</taxon>
        <taxon>Dikarya</taxon>
        <taxon>Ascomycota</taxon>
        <taxon>Taphrinomycotina</taxon>
        <taxon>Schizosaccharomycetes</taxon>
        <taxon>Schizosaccharomycetales</taxon>
        <taxon>Schizosaccharomycetaceae</taxon>
        <taxon>Schizosaccharomyces</taxon>
    </lineage>
</organism>
<gene>
    <name evidence="3" type="primary">thr1</name>
    <name type="ORF">SPBC4C3.03</name>
</gene>
<dbReference type="EC" id="2.7.1.39" evidence="1"/>
<dbReference type="EMBL" id="CU329671">
    <property type="protein sequence ID" value="CAA16824.1"/>
    <property type="molecule type" value="Genomic_DNA"/>
</dbReference>
<dbReference type="PIR" id="T40495">
    <property type="entry name" value="T40495"/>
</dbReference>
<dbReference type="RefSeq" id="NP_596303.1">
    <property type="nucleotide sequence ID" value="NM_001022224.2"/>
</dbReference>
<dbReference type="SMR" id="O43056"/>
<dbReference type="BioGRID" id="277374">
    <property type="interactions" value="1"/>
</dbReference>
<dbReference type="FunCoup" id="O43056">
    <property type="interactions" value="135"/>
</dbReference>
<dbReference type="STRING" id="284812.O43056"/>
<dbReference type="iPTMnet" id="O43056"/>
<dbReference type="PaxDb" id="4896-SPBC4C3.03.1"/>
<dbReference type="EnsemblFungi" id="SPBC4C3.03.1">
    <property type="protein sequence ID" value="SPBC4C3.03.1:pep"/>
    <property type="gene ID" value="SPBC4C3.03"/>
</dbReference>
<dbReference type="GeneID" id="2540857"/>
<dbReference type="KEGG" id="spo:2540857"/>
<dbReference type="PomBase" id="SPBC4C3.03"/>
<dbReference type="VEuPathDB" id="FungiDB:SPBC4C3.03"/>
<dbReference type="eggNOG" id="KOG1537">
    <property type="taxonomic scope" value="Eukaryota"/>
</dbReference>
<dbReference type="HOGENOM" id="CLU_041243_2_1_1"/>
<dbReference type="InParanoid" id="O43056"/>
<dbReference type="OMA" id="CANRIPH"/>
<dbReference type="PhylomeDB" id="O43056"/>
<dbReference type="UniPathway" id="UPA00050">
    <property type="reaction ID" value="UER00064"/>
</dbReference>
<dbReference type="PRO" id="PR:O43056"/>
<dbReference type="Proteomes" id="UP000002485">
    <property type="component" value="Chromosome II"/>
</dbReference>
<dbReference type="GO" id="GO:0005737">
    <property type="term" value="C:cytoplasm"/>
    <property type="evidence" value="ECO:0007005"/>
    <property type="project" value="PomBase"/>
</dbReference>
<dbReference type="GO" id="GO:0005524">
    <property type="term" value="F:ATP binding"/>
    <property type="evidence" value="ECO:0007669"/>
    <property type="project" value="UniProtKB-KW"/>
</dbReference>
<dbReference type="GO" id="GO:0004413">
    <property type="term" value="F:homoserine kinase activity"/>
    <property type="evidence" value="ECO:0000250"/>
    <property type="project" value="PomBase"/>
</dbReference>
<dbReference type="GO" id="GO:0006555">
    <property type="term" value="P:methionine metabolic process"/>
    <property type="evidence" value="ECO:0000250"/>
    <property type="project" value="PomBase"/>
</dbReference>
<dbReference type="GO" id="GO:0009088">
    <property type="term" value="P:threonine biosynthetic process"/>
    <property type="evidence" value="ECO:0007669"/>
    <property type="project" value="UniProtKB-UniPathway"/>
</dbReference>
<dbReference type="FunFam" id="3.30.230.10:FF:000068">
    <property type="entry name" value="Homoserine kinase"/>
    <property type="match status" value="1"/>
</dbReference>
<dbReference type="Gene3D" id="3.30.230.10">
    <property type="match status" value="1"/>
</dbReference>
<dbReference type="Gene3D" id="3.30.70.890">
    <property type="entry name" value="GHMP kinase, C-terminal domain"/>
    <property type="match status" value="1"/>
</dbReference>
<dbReference type="HAMAP" id="MF_00384">
    <property type="entry name" value="Homoser_kinase"/>
    <property type="match status" value="1"/>
</dbReference>
<dbReference type="InterPro" id="IPR013750">
    <property type="entry name" value="GHMP_kinase_C_dom"/>
</dbReference>
<dbReference type="InterPro" id="IPR036554">
    <property type="entry name" value="GHMP_kinase_C_sf"/>
</dbReference>
<dbReference type="InterPro" id="IPR006204">
    <property type="entry name" value="GHMP_kinase_N_dom"/>
</dbReference>
<dbReference type="InterPro" id="IPR006203">
    <property type="entry name" value="GHMP_knse_ATP-bd_CS"/>
</dbReference>
<dbReference type="InterPro" id="IPR000870">
    <property type="entry name" value="Homoserine_kinase"/>
</dbReference>
<dbReference type="InterPro" id="IPR020568">
    <property type="entry name" value="Ribosomal_Su5_D2-typ_SF"/>
</dbReference>
<dbReference type="InterPro" id="IPR014721">
    <property type="entry name" value="Ribsml_uS5_D2-typ_fold_subgr"/>
</dbReference>
<dbReference type="NCBIfam" id="TIGR00191">
    <property type="entry name" value="thrB"/>
    <property type="match status" value="1"/>
</dbReference>
<dbReference type="PANTHER" id="PTHR20861:SF1">
    <property type="entry name" value="HOMOSERINE KINASE"/>
    <property type="match status" value="1"/>
</dbReference>
<dbReference type="PANTHER" id="PTHR20861">
    <property type="entry name" value="HOMOSERINE/4-DIPHOSPHOCYTIDYL-2-C-METHYL-D-ERYTHRITOL KINASE"/>
    <property type="match status" value="1"/>
</dbReference>
<dbReference type="Pfam" id="PF08544">
    <property type="entry name" value="GHMP_kinases_C"/>
    <property type="match status" value="1"/>
</dbReference>
<dbReference type="Pfam" id="PF00288">
    <property type="entry name" value="GHMP_kinases_N"/>
    <property type="match status" value="1"/>
</dbReference>
<dbReference type="PIRSF" id="PIRSF000676">
    <property type="entry name" value="Homoser_kin"/>
    <property type="match status" value="1"/>
</dbReference>
<dbReference type="PRINTS" id="PR00958">
    <property type="entry name" value="HOMSERKINASE"/>
</dbReference>
<dbReference type="SUPFAM" id="SSF55060">
    <property type="entry name" value="GHMP Kinase, C-terminal domain"/>
    <property type="match status" value="1"/>
</dbReference>
<dbReference type="SUPFAM" id="SSF54211">
    <property type="entry name" value="Ribosomal protein S5 domain 2-like"/>
    <property type="match status" value="1"/>
</dbReference>
<dbReference type="PROSITE" id="PS00627">
    <property type="entry name" value="GHMP_KINASES_ATP"/>
    <property type="match status" value="1"/>
</dbReference>
<proteinExistence type="inferred from homology"/>
<name>KHSE_SCHPO</name>
<keyword id="KW-0028">Amino-acid biosynthesis</keyword>
<keyword id="KW-0067">ATP-binding</keyword>
<keyword id="KW-0418">Kinase</keyword>
<keyword id="KW-0547">Nucleotide-binding</keyword>
<keyword id="KW-1185">Reference proteome</keyword>
<keyword id="KW-0791">Threonine biosynthesis</keyword>
<keyword id="KW-0808">Transferase</keyword>
<feature type="chain" id="PRO_0000156655" description="Homoserine kinase">
    <location>
        <begin position="1"/>
        <end position="338"/>
    </location>
</feature>
<reference key="1">
    <citation type="journal article" date="2002" name="Nature">
        <title>The genome sequence of Schizosaccharomyces pombe.</title>
        <authorList>
            <person name="Wood V."/>
            <person name="Gwilliam R."/>
            <person name="Rajandream M.A."/>
            <person name="Lyne M.H."/>
            <person name="Lyne R."/>
            <person name="Stewart A."/>
            <person name="Sgouros J.G."/>
            <person name="Peat N."/>
            <person name="Hayles J."/>
            <person name="Baker S.G."/>
            <person name="Basham D."/>
            <person name="Bowman S."/>
            <person name="Brooks K."/>
            <person name="Brown D."/>
            <person name="Brown S."/>
            <person name="Chillingworth T."/>
            <person name="Churcher C.M."/>
            <person name="Collins M."/>
            <person name="Connor R."/>
            <person name="Cronin A."/>
            <person name="Davis P."/>
            <person name="Feltwell T."/>
            <person name="Fraser A."/>
            <person name="Gentles S."/>
            <person name="Goble A."/>
            <person name="Hamlin N."/>
            <person name="Harris D.E."/>
            <person name="Hidalgo J."/>
            <person name="Hodgson G."/>
            <person name="Holroyd S."/>
            <person name="Hornsby T."/>
            <person name="Howarth S."/>
            <person name="Huckle E.J."/>
            <person name="Hunt S."/>
            <person name="Jagels K."/>
            <person name="James K.D."/>
            <person name="Jones L."/>
            <person name="Jones M."/>
            <person name="Leather S."/>
            <person name="McDonald S."/>
            <person name="McLean J."/>
            <person name="Mooney P."/>
            <person name="Moule S."/>
            <person name="Mungall K.L."/>
            <person name="Murphy L.D."/>
            <person name="Niblett D."/>
            <person name="Odell C."/>
            <person name="Oliver K."/>
            <person name="O'Neil S."/>
            <person name="Pearson D."/>
            <person name="Quail M.A."/>
            <person name="Rabbinowitsch E."/>
            <person name="Rutherford K.M."/>
            <person name="Rutter S."/>
            <person name="Saunders D."/>
            <person name="Seeger K."/>
            <person name="Sharp S."/>
            <person name="Skelton J."/>
            <person name="Simmonds M.N."/>
            <person name="Squares R."/>
            <person name="Squares S."/>
            <person name="Stevens K."/>
            <person name="Taylor K."/>
            <person name="Taylor R.G."/>
            <person name="Tivey A."/>
            <person name="Walsh S.V."/>
            <person name="Warren T."/>
            <person name="Whitehead S."/>
            <person name="Woodward J.R."/>
            <person name="Volckaert G."/>
            <person name="Aert R."/>
            <person name="Robben J."/>
            <person name="Grymonprez B."/>
            <person name="Weltjens I."/>
            <person name="Vanstreels E."/>
            <person name="Rieger M."/>
            <person name="Schaefer M."/>
            <person name="Mueller-Auer S."/>
            <person name="Gabel C."/>
            <person name="Fuchs M."/>
            <person name="Duesterhoeft A."/>
            <person name="Fritzc C."/>
            <person name="Holzer E."/>
            <person name="Moestl D."/>
            <person name="Hilbert H."/>
            <person name="Borzym K."/>
            <person name="Langer I."/>
            <person name="Beck A."/>
            <person name="Lehrach H."/>
            <person name="Reinhardt R."/>
            <person name="Pohl T.M."/>
            <person name="Eger P."/>
            <person name="Zimmermann W."/>
            <person name="Wedler H."/>
            <person name="Wambutt R."/>
            <person name="Purnelle B."/>
            <person name="Goffeau A."/>
            <person name="Cadieu E."/>
            <person name="Dreano S."/>
            <person name="Gloux S."/>
            <person name="Lelaure V."/>
            <person name="Mottier S."/>
            <person name="Galibert F."/>
            <person name="Aves S.J."/>
            <person name="Xiang Z."/>
            <person name="Hunt C."/>
            <person name="Moore K."/>
            <person name="Hurst S.M."/>
            <person name="Lucas M."/>
            <person name="Rochet M."/>
            <person name="Gaillardin C."/>
            <person name="Tallada V.A."/>
            <person name="Garzon A."/>
            <person name="Thode G."/>
            <person name="Daga R.R."/>
            <person name="Cruzado L."/>
            <person name="Jimenez J."/>
            <person name="Sanchez M."/>
            <person name="del Rey F."/>
            <person name="Benito J."/>
            <person name="Dominguez A."/>
            <person name="Revuelta J.L."/>
            <person name="Moreno S."/>
            <person name="Armstrong J."/>
            <person name="Forsburg S.L."/>
            <person name="Cerutti L."/>
            <person name="Lowe T."/>
            <person name="McCombie W.R."/>
            <person name="Paulsen I."/>
            <person name="Potashkin J."/>
            <person name="Shpakovski G.V."/>
            <person name="Ussery D."/>
            <person name="Barrell B.G."/>
            <person name="Nurse P."/>
        </authorList>
    </citation>
    <scope>NUCLEOTIDE SEQUENCE [LARGE SCALE GENOMIC DNA]</scope>
    <source>
        <strain>972 / ATCC 24843</strain>
    </source>
</reference>
<evidence type="ECO:0000250" key="1">
    <source>
        <dbReference type="UniProtKB" id="P17423"/>
    </source>
</evidence>
<evidence type="ECO:0000305" key="2"/>
<evidence type="ECO:0000312" key="3">
    <source>
        <dbReference type="PomBase" id="SPBC4C3.03"/>
    </source>
</evidence>
<protein>
    <recommendedName>
        <fullName evidence="1">Homoserine kinase</fullName>
        <shortName>HK</shortName>
        <shortName>HSK</shortName>
        <ecNumber evidence="1">2.7.1.39</ecNumber>
    </recommendedName>
</protein>